<evidence type="ECO:0000255" key="1">
    <source>
        <dbReference type="HAMAP-Rule" id="MF_00170"/>
    </source>
</evidence>
<protein>
    <recommendedName>
        <fullName evidence="1">Ribose-5-phosphate isomerase A</fullName>
        <ecNumber evidence="1">5.3.1.6</ecNumber>
    </recommendedName>
    <alternativeName>
        <fullName evidence="1">Phosphoriboisomerase A</fullName>
        <shortName evidence="1">PRI</shortName>
    </alternativeName>
</protein>
<dbReference type="EC" id="5.3.1.6" evidence="1"/>
<dbReference type="EMBL" id="CP000449">
    <property type="protein sequence ID" value="ABI65265.1"/>
    <property type="molecule type" value="Genomic_DNA"/>
</dbReference>
<dbReference type="RefSeq" id="WP_011642912.1">
    <property type="nucleotide sequence ID" value="NC_008347.1"/>
</dbReference>
<dbReference type="SMR" id="Q0AR22"/>
<dbReference type="STRING" id="394221.Mmar10_0972"/>
<dbReference type="KEGG" id="mmr:Mmar10_0972"/>
<dbReference type="eggNOG" id="COG0120">
    <property type="taxonomic scope" value="Bacteria"/>
</dbReference>
<dbReference type="HOGENOM" id="CLU_056590_1_0_5"/>
<dbReference type="OrthoDB" id="5870696at2"/>
<dbReference type="UniPathway" id="UPA00115">
    <property type="reaction ID" value="UER00412"/>
</dbReference>
<dbReference type="Proteomes" id="UP000001964">
    <property type="component" value="Chromosome"/>
</dbReference>
<dbReference type="GO" id="GO:0004751">
    <property type="term" value="F:ribose-5-phosphate isomerase activity"/>
    <property type="evidence" value="ECO:0007669"/>
    <property type="project" value="UniProtKB-UniRule"/>
</dbReference>
<dbReference type="GO" id="GO:0009052">
    <property type="term" value="P:pentose-phosphate shunt, non-oxidative branch"/>
    <property type="evidence" value="ECO:0007669"/>
    <property type="project" value="UniProtKB-UniRule"/>
</dbReference>
<dbReference type="CDD" id="cd01398">
    <property type="entry name" value="RPI_A"/>
    <property type="match status" value="1"/>
</dbReference>
<dbReference type="FunFam" id="3.40.50.1360:FF:000001">
    <property type="entry name" value="Ribose-5-phosphate isomerase A"/>
    <property type="match status" value="1"/>
</dbReference>
<dbReference type="Gene3D" id="3.30.70.260">
    <property type="match status" value="1"/>
</dbReference>
<dbReference type="Gene3D" id="3.40.50.1360">
    <property type="match status" value="1"/>
</dbReference>
<dbReference type="HAMAP" id="MF_00170">
    <property type="entry name" value="Rib_5P_isom_A"/>
    <property type="match status" value="1"/>
</dbReference>
<dbReference type="InterPro" id="IPR037171">
    <property type="entry name" value="NagB/RpiA_transferase-like"/>
</dbReference>
<dbReference type="InterPro" id="IPR050262">
    <property type="entry name" value="Ribose-5P_isomerase"/>
</dbReference>
<dbReference type="InterPro" id="IPR020672">
    <property type="entry name" value="Ribose5P_isomerase_typA_subgr"/>
</dbReference>
<dbReference type="InterPro" id="IPR004788">
    <property type="entry name" value="Ribose5P_isomerase_type_A"/>
</dbReference>
<dbReference type="NCBIfam" id="NF001924">
    <property type="entry name" value="PRK00702.1"/>
    <property type="match status" value="1"/>
</dbReference>
<dbReference type="NCBIfam" id="TIGR00021">
    <property type="entry name" value="rpiA"/>
    <property type="match status" value="1"/>
</dbReference>
<dbReference type="PANTHER" id="PTHR43748">
    <property type="entry name" value="RIBOSE-5-PHOSPHATE ISOMERASE 3, CHLOROPLASTIC-RELATED"/>
    <property type="match status" value="1"/>
</dbReference>
<dbReference type="PANTHER" id="PTHR43748:SF3">
    <property type="entry name" value="RIBOSE-5-PHOSPHATE ISOMERASE 3, CHLOROPLASTIC-RELATED"/>
    <property type="match status" value="1"/>
</dbReference>
<dbReference type="Pfam" id="PF06026">
    <property type="entry name" value="Rib_5-P_isom_A"/>
    <property type="match status" value="1"/>
</dbReference>
<dbReference type="SUPFAM" id="SSF75445">
    <property type="entry name" value="D-ribose-5-phosphate isomerase (RpiA), lid domain"/>
    <property type="match status" value="1"/>
</dbReference>
<dbReference type="SUPFAM" id="SSF100950">
    <property type="entry name" value="NagB/RpiA/CoA transferase-like"/>
    <property type="match status" value="1"/>
</dbReference>
<name>RPIA_MARMM</name>
<gene>
    <name evidence="1" type="primary">rpiA</name>
    <name type="ordered locus">Mmar10_0972</name>
</gene>
<feature type="chain" id="PRO_1000016946" description="Ribose-5-phosphate isomerase A">
    <location>
        <begin position="1"/>
        <end position="233"/>
    </location>
</feature>
<feature type="active site" description="Proton acceptor" evidence="1">
    <location>
        <position position="105"/>
    </location>
</feature>
<feature type="binding site" evidence="1">
    <location>
        <begin position="28"/>
        <end position="31"/>
    </location>
    <ligand>
        <name>substrate</name>
    </ligand>
</feature>
<feature type="binding site" evidence="1">
    <location>
        <begin position="83"/>
        <end position="86"/>
    </location>
    <ligand>
        <name>substrate</name>
    </ligand>
</feature>
<feature type="binding site" evidence="1">
    <location>
        <begin position="96"/>
        <end position="99"/>
    </location>
    <ligand>
        <name>substrate</name>
    </ligand>
</feature>
<feature type="binding site" evidence="1">
    <location>
        <position position="123"/>
    </location>
    <ligand>
        <name>substrate</name>
    </ligand>
</feature>
<organism>
    <name type="scientific">Maricaulis maris (strain MCS10)</name>
    <name type="common">Caulobacter maris</name>
    <dbReference type="NCBI Taxonomy" id="394221"/>
    <lineage>
        <taxon>Bacteria</taxon>
        <taxon>Pseudomonadati</taxon>
        <taxon>Pseudomonadota</taxon>
        <taxon>Alphaproteobacteria</taxon>
        <taxon>Maricaulales</taxon>
        <taxon>Maricaulaceae</taxon>
        <taxon>Maricaulis</taxon>
    </lineage>
</organism>
<reference key="1">
    <citation type="submission" date="2006-08" db="EMBL/GenBank/DDBJ databases">
        <title>Complete sequence of Maricaulis maris MCS10.</title>
        <authorList>
            <consortium name="US DOE Joint Genome Institute"/>
            <person name="Copeland A."/>
            <person name="Lucas S."/>
            <person name="Lapidus A."/>
            <person name="Barry K."/>
            <person name="Detter J.C."/>
            <person name="Glavina del Rio T."/>
            <person name="Hammon N."/>
            <person name="Israni S."/>
            <person name="Dalin E."/>
            <person name="Tice H."/>
            <person name="Pitluck S."/>
            <person name="Saunders E."/>
            <person name="Brettin T."/>
            <person name="Bruce D."/>
            <person name="Han C."/>
            <person name="Tapia R."/>
            <person name="Gilna P."/>
            <person name="Schmutz J."/>
            <person name="Larimer F."/>
            <person name="Land M."/>
            <person name="Hauser L."/>
            <person name="Kyrpides N."/>
            <person name="Mikhailova N."/>
            <person name="Viollier P."/>
            <person name="Stephens C."/>
            <person name="Richardson P."/>
        </authorList>
    </citation>
    <scope>NUCLEOTIDE SEQUENCE [LARGE SCALE GENOMIC DNA]</scope>
    <source>
        <strain>MCS10</strain>
    </source>
</reference>
<keyword id="KW-0413">Isomerase</keyword>
<keyword id="KW-1185">Reference proteome</keyword>
<proteinExistence type="inferred from homology"/>
<sequence length="233" mass="24674">MTALRQKTLAAAAALDYIESGMTLGLGSGSTAEIFLRLLGEKIKDGLDVRGVPTSQRTAQIAAENGVPLIDVDHVNNIAITIDGADEVDGRFQLIKGGGACLLREKIIAHASDLMIVMVDESKLVATLGKFPLPVEVDRFGFSLTASQVYEALRRAGIKSPDVQLRRKGDGLEPLVTDGGNYILDCACEAIPDAGAVDRALKAIPGVVEHGLFINLARVVIVGEDGEARVMEL</sequence>
<comment type="function">
    <text evidence="1">Catalyzes the reversible conversion of ribose-5-phosphate to ribulose 5-phosphate.</text>
</comment>
<comment type="catalytic activity">
    <reaction evidence="1">
        <text>aldehydo-D-ribose 5-phosphate = D-ribulose 5-phosphate</text>
        <dbReference type="Rhea" id="RHEA:14657"/>
        <dbReference type="ChEBI" id="CHEBI:58121"/>
        <dbReference type="ChEBI" id="CHEBI:58273"/>
        <dbReference type="EC" id="5.3.1.6"/>
    </reaction>
</comment>
<comment type="pathway">
    <text evidence="1">Carbohydrate degradation; pentose phosphate pathway; D-ribose 5-phosphate from D-ribulose 5-phosphate (non-oxidative stage): step 1/1.</text>
</comment>
<comment type="subunit">
    <text evidence="1">Homodimer.</text>
</comment>
<comment type="similarity">
    <text evidence="1">Belongs to the ribose 5-phosphate isomerase family.</text>
</comment>
<accession>Q0AR22</accession>